<accession>P68518</accession>
<accession>P00023</accession>
<reference key="1">
    <citation type="journal article" date="1991" name="Biochem. J.">
        <title>Rattlesnake cytochrome c. A re-appraisal of the reported amino acid sequence.</title>
        <authorList>
            <person name="Ambler R.P."/>
            <person name="Daniel M."/>
        </authorList>
    </citation>
    <scope>PROTEIN SEQUENCE OF 2-105</scope>
    <scope>ACETYLATION AT GLY-2</scope>
</reference>
<feature type="initiator methionine" description="Removed" evidence="1">
    <location>
        <position position="1"/>
    </location>
</feature>
<feature type="chain" id="PRO_0000108246" description="Cytochrome c">
    <location>
        <begin position="2"/>
        <end position="105"/>
    </location>
</feature>
<feature type="binding site" description="covalent">
    <location>
        <position position="15"/>
    </location>
    <ligand>
        <name>heme c</name>
        <dbReference type="ChEBI" id="CHEBI:61717"/>
    </ligand>
</feature>
<feature type="binding site" description="covalent">
    <location>
        <position position="18"/>
    </location>
    <ligand>
        <name>heme c</name>
        <dbReference type="ChEBI" id="CHEBI:61717"/>
    </ligand>
</feature>
<feature type="binding site" description="axial binding residue">
    <location>
        <position position="19"/>
    </location>
    <ligand>
        <name>heme c</name>
        <dbReference type="ChEBI" id="CHEBI:61717"/>
    </ligand>
    <ligandPart>
        <name>Fe</name>
        <dbReference type="ChEBI" id="CHEBI:18248"/>
    </ligandPart>
</feature>
<feature type="binding site" description="axial binding residue">
    <location>
        <position position="81"/>
    </location>
    <ligand>
        <name>heme c</name>
        <dbReference type="ChEBI" id="CHEBI:61717"/>
    </ligand>
    <ligandPart>
        <name>Fe</name>
        <dbReference type="ChEBI" id="CHEBI:18248"/>
    </ligandPart>
</feature>
<feature type="modified residue" description="N-acetylglycine" evidence="1">
    <location>
        <position position="2"/>
    </location>
</feature>
<proteinExistence type="evidence at protein level"/>
<name>CYC_CROAT</name>
<dbReference type="SMR" id="P68518"/>
<dbReference type="iPTMnet" id="P68518"/>
<dbReference type="GO" id="GO:0005758">
    <property type="term" value="C:mitochondrial intermembrane space"/>
    <property type="evidence" value="ECO:0007669"/>
    <property type="project" value="UniProtKB-SubCell"/>
</dbReference>
<dbReference type="GO" id="GO:0009055">
    <property type="term" value="F:electron transfer activity"/>
    <property type="evidence" value="ECO:0007669"/>
    <property type="project" value="InterPro"/>
</dbReference>
<dbReference type="GO" id="GO:0020037">
    <property type="term" value="F:heme binding"/>
    <property type="evidence" value="ECO:0007669"/>
    <property type="project" value="InterPro"/>
</dbReference>
<dbReference type="GO" id="GO:0046872">
    <property type="term" value="F:metal ion binding"/>
    <property type="evidence" value="ECO:0007669"/>
    <property type="project" value="UniProtKB-KW"/>
</dbReference>
<dbReference type="FunFam" id="1.10.760.10:FF:000001">
    <property type="entry name" value="Cytochrome c iso-1"/>
    <property type="match status" value="1"/>
</dbReference>
<dbReference type="Gene3D" id="1.10.760.10">
    <property type="entry name" value="Cytochrome c-like domain"/>
    <property type="match status" value="1"/>
</dbReference>
<dbReference type="InterPro" id="IPR009056">
    <property type="entry name" value="Cyt_c-like_dom"/>
</dbReference>
<dbReference type="InterPro" id="IPR036909">
    <property type="entry name" value="Cyt_c-like_dom_sf"/>
</dbReference>
<dbReference type="InterPro" id="IPR002327">
    <property type="entry name" value="Cyt_c_1A/1B"/>
</dbReference>
<dbReference type="PANTHER" id="PTHR11961">
    <property type="entry name" value="CYTOCHROME C"/>
    <property type="match status" value="1"/>
</dbReference>
<dbReference type="Pfam" id="PF00034">
    <property type="entry name" value="Cytochrom_C"/>
    <property type="match status" value="1"/>
</dbReference>
<dbReference type="PRINTS" id="PR00604">
    <property type="entry name" value="CYTCHRMECIAB"/>
</dbReference>
<dbReference type="SUPFAM" id="SSF46626">
    <property type="entry name" value="Cytochrome c"/>
    <property type="match status" value="1"/>
</dbReference>
<dbReference type="PROSITE" id="PS51007">
    <property type="entry name" value="CYTC"/>
    <property type="match status" value="1"/>
</dbReference>
<organism>
    <name type="scientific">Crotalus atrox</name>
    <name type="common">Western diamondback rattlesnake</name>
    <dbReference type="NCBI Taxonomy" id="8730"/>
    <lineage>
        <taxon>Eukaryota</taxon>
        <taxon>Metazoa</taxon>
        <taxon>Chordata</taxon>
        <taxon>Craniata</taxon>
        <taxon>Vertebrata</taxon>
        <taxon>Euteleostomi</taxon>
        <taxon>Lepidosauria</taxon>
        <taxon>Squamata</taxon>
        <taxon>Bifurcata</taxon>
        <taxon>Unidentata</taxon>
        <taxon>Episquamata</taxon>
        <taxon>Toxicofera</taxon>
        <taxon>Serpentes</taxon>
        <taxon>Colubroidea</taxon>
        <taxon>Viperidae</taxon>
        <taxon>Crotalinae</taxon>
        <taxon>Crotalus</taxon>
    </lineage>
</organism>
<evidence type="ECO:0000269" key="1">
    <source>
    </source>
</evidence>
<evidence type="ECO:0000305" key="2"/>
<comment type="function">
    <text>Electron carrier protein. The oxidized form of the cytochrome c heme group can accept an electron from the heme group of the cytochrome c1 subunit of cytochrome reductase. Cytochrome c then transfers this electron to the cytochrome oxidase complex, the final protein carrier in the mitochondrial electron-transport chain.</text>
</comment>
<comment type="subcellular location">
    <subcellularLocation>
        <location>Mitochondrion intermembrane space</location>
    </subcellularLocation>
    <text>Loosely associated with the inner membrane.</text>
</comment>
<comment type="PTM">
    <text>Binds 1 heme c group covalently per subunit.</text>
</comment>
<comment type="similarity">
    <text evidence="2">Belongs to the cytochrome c family.</text>
</comment>
<comment type="online information" name="Protein Spotlight">
    <link uri="https://www.proteinspotlight.org/back_issues/076"/>
    <text>Life shuttle - Issue 76 of November 2006</text>
</comment>
<protein>
    <recommendedName>
        <fullName>Cytochrome c</fullName>
    </recommendedName>
</protein>
<sequence length="105" mass="11587">MGDVEKGKKIFSMKCGTCHTVEEGGKHKTGPNLHGLFGRKTGQAVGYSYTAANKNKGIIWGDDTLMEYLENPKKYIPGTKMVFTGLKSKKERTDLIAYLKEATAK</sequence>
<keyword id="KW-0007">Acetylation</keyword>
<keyword id="KW-0903">Direct protein sequencing</keyword>
<keyword id="KW-0249">Electron transport</keyword>
<keyword id="KW-0349">Heme</keyword>
<keyword id="KW-0408">Iron</keyword>
<keyword id="KW-0479">Metal-binding</keyword>
<keyword id="KW-0496">Mitochondrion</keyword>
<keyword id="KW-0679">Respiratory chain</keyword>
<keyword id="KW-0813">Transport</keyword>